<gene>
    <name evidence="1" type="primary">rpl37e</name>
    <name type="ordered locus">NP_4310A</name>
</gene>
<protein>
    <recommendedName>
        <fullName evidence="1">Large ribosomal subunit protein eL37</fullName>
    </recommendedName>
    <alternativeName>
        <fullName evidence="2">50S ribosomal protein L37e</fullName>
    </alternativeName>
</protein>
<accession>Q3INQ6</accession>
<dbReference type="EMBL" id="CR936257">
    <property type="protein sequence ID" value="CAI50246.1"/>
    <property type="molecule type" value="Genomic_DNA"/>
</dbReference>
<dbReference type="RefSeq" id="WP_011323862.1">
    <property type="nucleotide sequence ID" value="NC_007426.1"/>
</dbReference>
<dbReference type="SMR" id="Q3INQ6"/>
<dbReference type="STRING" id="348780.NP_4310A"/>
<dbReference type="EnsemblBacteria" id="CAI50246">
    <property type="protein sequence ID" value="CAI50246"/>
    <property type="gene ID" value="NP_4310A"/>
</dbReference>
<dbReference type="GeneID" id="3703143"/>
<dbReference type="KEGG" id="nph:NP_4310A"/>
<dbReference type="eggNOG" id="arCOG04126">
    <property type="taxonomic scope" value="Archaea"/>
</dbReference>
<dbReference type="HOGENOM" id="CLU_208825_0_0_2"/>
<dbReference type="OrthoDB" id="5619at2157"/>
<dbReference type="Proteomes" id="UP000002698">
    <property type="component" value="Chromosome"/>
</dbReference>
<dbReference type="GO" id="GO:0022625">
    <property type="term" value="C:cytosolic large ribosomal subunit"/>
    <property type="evidence" value="ECO:0007669"/>
    <property type="project" value="TreeGrafter"/>
</dbReference>
<dbReference type="GO" id="GO:0019843">
    <property type="term" value="F:rRNA binding"/>
    <property type="evidence" value="ECO:0007669"/>
    <property type="project" value="UniProtKB-KW"/>
</dbReference>
<dbReference type="GO" id="GO:0003735">
    <property type="term" value="F:structural constituent of ribosome"/>
    <property type="evidence" value="ECO:0007669"/>
    <property type="project" value="InterPro"/>
</dbReference>
<dbReference type="GO" id="GO:0008270">
    <property type="term" value="F:zinc ion binding"/>
    <property type="evidence" value="ECO:0007669"/>
    <property type="project" value="UniProtKB-UniRule"/>
</dbReference>
<dbReference type="GO" id="GO:0006412">
    <property type="term" value="P:translation"/>
    <property type="evidence" value="ECO:0007669"/>
    <property type="project" value="UniProtKB-UniRule"/>
</dbReference>
<dbReference type="FunFam" id="2.20.25.30:FF:000003">
    <property type="entry name" value="50S ribosomal protein L37e"/>
    <property type="match status" value="1"/>
</dbReference>
<dbReference type="Gene3D" id="2.20.25.30">
    <property type="match status" value="1"/>
</dbReference>
<dbReference type="HAMAP" id="MF_00547">
    <property type="entry name" value="Ribosomal_eL37"/>
    <property type="match status" value="1"/>
</dbReference>
<dbReference type="InterPro" id="IPR001569">
    <property type="entry name" value="Ribosomal_eL37"/>
</dbReference>
<dbReference type="InterPro" id="IPR011331">
    <property type="entry name" value="Ribosomal_eL37/eL43"/>
</dbReference>
<dbReference type="InterPro" id="IPR018267">
    <property type="entry name" value="Ribosomal_eL37_CS"/>
</dbReference>
<dbReference type="InterPro" id="IPR011332">
    <property type="entry name" value="Ribosomal_zn-bd"/>
</dbReference>
<dbReference type="NCBIfam" id="NF003214">
    <property type="entry name" value="PRK04179.1"/>
    <property type="match status" value="1"/>
</dbReference>
<dbReference type="PANTHER" id="PTHR10768">
    <property type="entry name" value="60S RIBOSOMAL PROTEIN L37"/>
    <property type="match status" value="1"/>
</dbReference>
<dbReference type="PANTHER" id="PTHR10768:SF0">
    <property type="entry name" value="RIBOSOMAL PROTEIN L37"/>
    <property type="match status" value="1"/>
</dbReference>
<dbReference type="Pfam" id="PF01907">
    <property type="entry name" value="Ribosomal_L37e"/>
    <property type="match status" value="1"/>
</dbReference>
<dbReference type="SUPFAM" id="SSF57829">
    <property type="entry name" value="Zn-binding ribosomal proteins"/>
    <property type="match status" value="1"/>
</dbReference>
<dbReference type="PROSITE" id="PS01077">
    <property type="entry name" value="RIBOSOMAL_L37E"/>
    <property type="match status" value="1"/>
</dbReference>
<feature type="chain" id="PRO_1000017770" description="Large ribosomal subunit protein eL37">
    <location>
        <begin position="1"/>
        <end position="57"/>
    </location>
</feature>
<feature type="zinc finger region" description="C4-type" evidence="1">
    <location>
        <begin position="20"/>
        <end position="38"/>
    </location>
</feature>
<feature type="binding site" evidence="1">
    <location>
        <position position="20"/>
    </location>
    <ligand>
        <name>Zn(2+)</name>
        <dbReference type="ChEBI" id="CHEBI:29105"/>
    </ligand>
</feature>
<feature type="binding site" evidence="1">
    <location>
        <position position="23"/>
    </location>
    <ligand>
        <name>Zn(2+)</name>
        <dbReference type="ChEBI" id="CHEBI:29105"/>
    </ligand>
</feature>
<feature type="binding site" evidence="1">
    <location>
        <position position="35"/>
    </location>
    <ligand>
        <name>Zn(2+)</name>
        <dbReference type="ChEBI" id="CHEBI:29105"/>
    </ligand>
</feature>
<feature type="binding site" evidence="1">
    <location>
        <position position="38"/>
    </location>
    <ligand>
        <name>Zn(2+)</name>
        <dbReference type="ChEBI" id="CHEBI:29105"/>
    </ligand>
</feature>
<keyword id="KW-0479">Metal-binding</keyword>
<keyword id="KW-1185">Reference proteome</keyword>
<keyword id="KW-0687">Ribonucleoprotein</keyword>
<keyword id="KW-0689">Ribosomal protein</keyword>
<keyword id="KW-0694">RNA-binding</keyword>
<keyword id="KW-0699">rRNA-binding</keyword>
<keyword id="KW-0862">Zinc</keyword>
<keyword id="KW-0863">Zinc-finger</keyword>
<sequence length="57" mass="6349">MTGAGTPSQGKKNKTTHVKCRRCGEKSYHKQKKVCASCGFGKSAKRRDYAWQSKQGE</sequence>
<name>RL37_NATPD</name>
<reference key="1">
    <citation type="journal article" date="2005" name="Genome Res.">
        <title>Living with two extremes: conclusions from the genome sequence of Natronomonas pharaonis.</title>
        <authorList>
            <person name="Falb M."/>
            <person name="Pfeiffer F."/>
            <person name="Palm P."/>
            <person name="Rodewald K."/>
            <person name="Hickmann V."/>
            <person name="Tittor J."/>
            <person name="Oesterhelt D."/>
        </authorList>
    </citation>
    <scope>NUCLEOTIDE SEQUENCE [LARGE SCALE GENOMIC DNA]</scope>
    <source>
        <strain>ATCC 35678 / DSM 2160 / CIP 103997 / JCM 8858 / NBRC 14720 / NCIMB 2260 / Gabara</strain>
    </source>
</reference>
<comment type="function">
    <text evidence="1">Binds to the 23S rRNA.</text>
</comment>
<comment type="cofactor">
    <cofactor evidence="1">
        <name>Zn(2+)</name>
        <dbReference type="ChEBI" id="CHEBI:29105"/>
    </cofactor>
    <text evidence="1">Binds 1 zinc ion per subunit.</text>
</comment>
<comment type="similarity">
    <text evidence="1">Belongs to the eukaryotic ribosomal protein eL37 family.</text>
</comment>
<organism>
    <name type="scientific">Natronomonas pharaonis (strain ATCC 35678 / DSM 2160 / CIP 103997 / JCM 8858 / NBRC 14720 / NCIMB 2260 / Gabara)</name>
    <name type="common">Halobacterium pharaonis</name>
    <dbReference type="NCBI Taxonomy" id="348780"/>
    <lineage>
        <taxon>Archaea</taxon>
        <taxon>Methanobacteriati</taxon>
        <taxon>Methanobacteriota</taxon>
        <taxon>Stenosarchaea group</taxon>
        <taxon>Halobacteria</taxon>
        <taxon>Halobacteriales</taxon>
        <taxon>Haloarculaceae</taxon>
        <taxon>Natronomonas</taxon>
    </lineage>
</organism>
<proteinExistence type="inferred from homology"/>
<evidence type="ECO:0000255" key="1">
    <source>
        <dbReference type="HAMAP-Rule" id="MF_00547"/>
    </source>
</evidence>
<evidence type="ECO:0000305" key="2"/>